<accession>B8JAF3</accession>
<name>LEPA_ANAD2</name>
<protein>
    <recommendedName>
        <fullName evidence="1">Elongation factor 4</fullName>
        <shortName evidence="1">EF-4</shortName>
        <ecNumber evidence="1">3.6.5.n1</ecNumber>
    </recommendedName>
    <alternativeName>
        <fullName evidence="1">Ribosomal back-translocase LepA</fullName>
    </alternativeName>
</protein>
<evidence type="ECO:0000255" key="1">
    <source>
        <dbReference type="HAMAP-Rule" id="MF_00071"/>
    </source>
</evidence>
<organism>
    <name type="scientific">Anaeromyxobacter dehalogenans (strain 2CP-1 / ATCC BAA-258)</name>
    <dbReference type="NCBI Taxonomy" id="455488"/>
    <lineage>
        <taxon>Bacteria</taxon>
        <taxon>Pseudomonadati</taxon>
        <taxon>Myxococcota</taxon>
        <taxon>Myxococcia</taxon>
        <taxon>Myxococcales</taxon>
        <taxon>Cystobacterineae</taxon>
        <taxon>Anaeromyxobacteraceae</taxon>
        <taxon>Anaeromyxobacter</taxon>
    </lineage>
</organism>
<comment type="function">
    <text evidence="1">Required for accurate and efficient protein synthesis under certain stress conditions. May act as a fidelity factor of the translation reaction, by catalyzing a one-codon backward translocation of tRNAs on improperly translocated ribosomes. Back-translocation proceeds from a post-translocation (POST) complex to a pre-translocation (PRE) complex, thus giving elongation factor G a second chance to translocate the tRNAs correctly. Binds to ribosomes in a GTP-dependent manner.</text>
</comment>
<comment type="catalytic activity">
    <reaction evidence="1">
        <text>GTP + H2O = GDP + phosphate + H(+)</text>
        <dbReference type="Rhea" id="RHEA:19669"/>
        <dbReference type="ChEBI" id="CHEBI:15377"/>
        <dbReference type="ChEBI" id="CHEBI:15378"/>
        <dbReference type="ChEBI" id="CHEBI:37565"/>
        <dbReference type="ChEBI" id="CHEBI:43474"/>
        <dbReference type="ChEBI" id="CHEBI:58189"/>
        <dbReference type="EC" id="3.6.5.n1"/>
    </reaction>
</comment>
<comment type="subcellular location">
    <subcellularLocation>
        <location evidence="1">Cell inner membrane</location>
        <topology evidence="1">Peripheral membrane protein</topology>
        <orientation evidence="1">Cytoplasmic side</orientation>
    </subcellularLocation>
</comment>
<comment type="similarity">
    <text evidence="1">Belongs to the TRAFAC class translation factor GTPase superfamily. Classic translation factor GTPase family. LepA subfamily.</text>
</comment>
<reference key="1">
    <citation type="submission" date="2009-01" db="EMBL/GenBank/DDBJ databases">
        <title>Complete sequence of Anaeromyxobacter dehalogenans 2CP-1.</title>
        <authorList>
            <person name="Lucas S."/>
            <person name="Copeland A."/>
            <person name="Lapidus A."/>
            <person name="Glavina del Rio T."/>
            <person name="Dalin E."/>
            <person name="Tice H."/>
            <person name="Bruce D."/>
            <person name="Goodwin L."/>
            <person name="Pitluck S."/>
            <person name="Saunders E."/>
            <person name="Brettin T."/>
            <person name="Detter J.C."/>
            <person name="Han C."/>
            <person name="Larimer F."/>
            <person name="Land M."/>
            <person name="Hauser L."/>
            <person name="Kyrpides N."/>
            <person name="Ovchinnikova G."/>
            <person name="Beliaev A.S."/>
            <person name="Richardson P."/>
        </authorList>
    </citation>
    <scope>NUCLEOTIDE SEQUENCE [LARGE SCALE GENOMIC DNA]</scope>
    <source>
        <strain>2CP-1 / ATCC BAA-258</strain>
    </source>
</reference>
<feature type="chain" id="PRO_1000118029" description="Elongation factor 4">
    <location>
        <begin position="1"/>
        <end position="601"/>
    </location>
</feature>
<feature type="domain" description="tr-type G">
    <location>
        <begin position="6"/>
        <end position="188"/>
    </location>
</feature>
<feature type="binding site" evidence="1">
    <location>
        <begin position="18"/>
        <end position="23"/>
    </location>
    <ligand>
        <name>GTP</name>
        <dbReference type="ChEBI" id="CHEBI:37565"/>
    </ligand>
</feature>
<feature type="binding site" evidence="1">
    <location>
        <begin position="135"/>
        <end position="138"/>
    </location>
    <ligand>
        <name>GTP</name>
        <dbReference type="ChEBI" id="CHEBI:37565"/>
    </ligand>
</feature>
<dbReference type="EC" id="3.6.5.n1" evidence="1"/>
<dbReference type="EMBL" id="CP001359">
    <property type="protein sequence ID" value="ACL65672.1"/>
    <property type="molecule type" value="Genomic_DNA"/>
</dbReference>
<dbReference type="RefSeq" id="WP_012633499.1">
    <property type="nucleotide sequence ID" value="NC_011891.1"/>
</dbReference>
<dbReference type="SMR" id="B8JAF3"/>
<dbReference type="KEGG" id="acp:A2cp1_2334"/>
<dbReference type="HOGENOM" id="CLU_009995_3_3_7"/>
<dbReference type="Proteomes" id="UP000007089">
    <property type="component" value="Chromosome"/>
</dbReference>
<dbReference type="GO" id="GO:0005886">
    <property type="term" value="C:plasma membrane"/>
    <property type="evidence" value="ECO:0007669"/>
    <property type="project" value="UniProtKB-SubCell"/>
</dbReference>
<dbReference type="GO" id="GO:0005525">
    <property type="term" value="F:GTP binding"/>
    <property type="evidence" value="ECO:0007669"/>
    <property type="project" value="UniProtKB-UniRule"/>
</dbReference>
<dbReference type="GO" id="GO:0003924">
    <property type="term" value="F:GTPase activity"/>
    <property type="evidence" value="ECO:0007669"/>
    <property type="project" value="UniProtKB-UniRule"/>
</dbReference>
<dbReference type="GO" id="GO:0043022">
    <property type="term" value="F:ribosome binding"/>
    <property type="evidence" value="ECO:0007669"/>
    <property type="project" value="UniProtKB-UniRule"/>
</dbReference>
<dbReference type="GO" id="GO:0003746">
    <property type="term" value="F:translation elongation factor activity"/>
    <property type="evidence" value="ECO:0007669"/>
    <property type="project" value="UniProtKB-UniRule"/>
</dbReference>
<dbReference type="GO" id="GO:0045727">
    <property type="term" value="P:positive regulation of translation"/>
    <property type="evidence" value="ECO:0007669"/>
    <property type="project" value="UniProtKB-UniRule"/>
</dbReference>
<dbReference type="CDD" id="cd03699">
    <property type="entry name" value="EF4_II"/>
    <property type="match status" value="1"/>
</dbReference>
<dbReference type="CDD" id="cd16260">
    <property type="entry name" value="EF4_III"/>
    <property type="match status" value="1"/>
</dbReference>
<dbReference type="CDD" id="cd01890">
    <property type="entry name" value="LepA"/>
    <property type="match status" value="1"/>
</dbReference>
<dbReference type="CDD" id="cd03709">
    <property type="entry name" value="lepA_C"/>
    <property type="match status" value="1"/>
</dbReference>
<dbReference type="FunFam" id="3.40.50.300:FF:000078">
    <property type="entry name" value="Elongation factor 4"/>
    <property type="match status" value="1"/>
</dbReference>
<dbReference type="FunFam" id="2.40.30.10:FF:000015">
    <property type="entry name" value="Translation factor GUF1, mitochondrial"/>
    <property type="match status" value="1"/>
</dbReference>
<dbReference type="FunFam" id="3.30.70.240:FF:000007">
    <property type="entry name" value="Translation factor GUF1, mitochondrial"/>
    <property type="match status" value="1"/>
</dbReference>
<dbReference type="FunFam" id="3.30.70.2570:FF:000001">
    <property type="entry name" value="Translation factor GUF1, mitochondrial"/>
    <property type="match status" value="1"/>
</dbReference>
<dbReference type="FunFam" id="3.30.70.870:FF:000004">
    <property type="entry name" value="Translation factor GUF1, mitochondrial"/>
    <property type="match status" value="1"/>
</dbReference>
<dbReference type="Gene3D" id="3.30.70.240">
    <property type="match status" value="1"/>
</dbReference>
<dbReference type="Gene3D" id="3.30.70.2570">
    <property type="entry name" value="Elongation factor 4, C-terminal domain"/>
    <property type="match status" value="1"/>
</dbReference>
<dbReference type="Gene3D" id="3.30.70.870">
    <property type="entry name" value="Elongation Factor G (Translational Gtpase), domain 3"/>
    <property type="match status" value="1"/>
</dbReference>
<dbReference type="Gene3D" id="3.40.50.300">
    <property type="entry name" value="P-loop containing nucleotide triphosphate hydrolases"/>
    <property type="match status" value="1"/>
</dbReference>
<dbReference type="Gene3D" id="2.40.30.10">
    <property type="entry name" value="Translation factors"/>
    <property type="match status" value="1"/>
</dbReference>
<dbReference type="HAMAP" id="MF_00071">
    <property type="entry name" value="LepA"/>
    <property type="match status" value="1"/>
</dbReference>
<dbReference type="InterPro" id="IPR006297">
    <property type="entry name" value="EF-4"/>
</dbReference>
<dbReference type="InterPro" id="IPR035647">
    <property type="entry name" value="EFG_III/V"/>
</dbReference>
<dbReference type="InterPro" id="IPR000640">
    <property type="entry name" value="EFG_V-like"/>
</dbReference>
<dbReference type="InterPro" id="IPR004161">
    <property type="entry name" value="EFTu-like_2"/>
</dbReference>
<dbReference type="InterPro" id="IPR031157">
    <property type="entry name" value="G_TR_CS"/>
</dbReference>
<dbReference type="InterPro" id="IPR038363">
    <property type="entry name" value="LepA_C_sf"/>
</dbReference>
<dbReference type="InterPro" id="IPR013842">
    <property type="entry name" value="LepA_CTD"/>
</dbReference>
<dbReference type="InterPro" id="IPR035654">
    <property type="entry name" value="LepA_IV"/>
</dbReference>
<dbReference type="InterPro" id="IPR027417">
    <property type="entry name" value="P-loop_NTPase"/>
</dbReference>
<dbReference type="InterPro" id="IPR005225">
    <property type="entry name" value="Small_GTP-bd"/>
</dbReference>
<dbReference type="InterPro" id="IPR000795">
    <property type="entry name" value="T_Tr_GTP-bd_dom"/>
</dbReference>
<dbReference type="InterPro" id="IPR009000">
    <property type="entry name" value="Transl_B-barrel_sf"/>
</dbReference>
<dbReference type="NCBIfam" id="TIGR01393">
    <property type="entry name" value="lepA"/>
    <property type="match status" value="1"/>
</dbReference>
<dbReference type="NCBIfam" id="TIGR00231">
    <property type="entry name" value="small_GTP"/>
    <property type="match status" value="1"/>
</dbReference>
<dbReference type="PANTHER" id="PTHR43512:SF4">
    <property type="entry name" value="TRANSLATION FACTOR GUF1 HOMOLOG, CHLOROPLASTIC"/>
    <property type="match status" value="1"/>
</dbReference>
<dbReference type="PANTHER" id="PTHR43512">
    <property type="entry name" value="TRANSLATION FACTOR GUF1-RELATED"/>
    <property type="match status" value="1"/>
</dbReference>
<dbReference type="Pfam" id="PF00679">
    <property type="entry name" value="EFG_C"/>
    <property type="match status" value="1"/>
</dbReference>
<dbReference type="Pfam" id="PF00009">
    <property type="entry name" value="GTP_EFTU"/>
    <property type="match status" value="1"/>
</dbReference>
<dbReference type="Pfam" id="PF03144">
    <property type="entry name" value="GTP_EFTU_D2"/>
    <property type="match status" value="1"/>
</dbReference>
<dbReference type="Pfam" id="PF06421">
    <property type="entry name" value="LepA_C"/>
    <property type="match status" value="1"/>
</dbReference>
<dbReference type="PRINTS" id="PR00315">
    <property type="entry name" value="ELONGATNFCT"/>
</dbReference>
<dbReference type="SUPFAM" id="SSF54980">
    <property type="entry name" value="EF-G C-terminal domain-like"/>
    <property type="match status" value="2"/>
</dbReference>
<dbReference type="SUPFAM" id="SSF52540">
    <property type="entry name" value="P-loop containing nucleoside triphosphate hydrolases"/>
    <property type="match status" value="1"/>
</dbReference>
<dbReference type="SUPFAM" id="SSF50447">
    <property type="entry name" value="Translation proteins"/>
    <property type="match status" value="1"/>
</dbReference>
<dbReference type="PROSITE" id="PS00301">
    <property type="entry name" value="G_TR_1"/>
    <property type="match status" value="1"/>
</dbReference>
<dbReference type="PROSITE" id="PS51722">
    <property type="entry name" value="G_TR_2"/>
    <property type="match status" value="1"/>
</dbReference>
<sequence>MAEKNSHIRNFSIIAHIDHGKSTLADRLLEHTGTVTKREAQAQFLDNMELERERGITIKAQTVRMKYRAQDGRDYELNLIDTPGHVDFAYEVSRSMAACEGAILVVDATQGVEAQTLANVYQALDHDLEIVPVINKIDLPSADVEGVRQEIEEVIGLDAKDAVPASAKEGIGIGEILEQIVHRVPAPEGDPDAPLKAIVFDSWYDSYRGVVMLVRVFEGTVRPKQKIRLWSNRKEFEVQELGVFAPFAKAVVELQAGEVGVVVANVKDVHDAKVGDTITDATRPTEEPFPGFKVVKPMVFSGVFPIEAADYEQLRDALEKLSLNDSAFTYEPETSQALGFGFRCGYLGLLHMEIVQERLEREYQLALITTAPSVVYRVTDTSGAVEEIDNPAKLPPVQKIAKLEEPHLTCHIHARTEDVGAILKLCQERRGLQRDLKYLGTKRVQITYDIPLAEVVFDFFDKLKSVSRGYASLDYELKGYEEADLVKLDILINGEPVDALSVIVHRERAYQRGRDLCQRLREVIPKQMYEVAIQAAIGAKVIARETVKAFRKNVLAKCYGGDISRKRKLLEKQKEGKKRMKQVGSVEIPQEAFLAVLKVEE</sequence>
<keyword id="KW-0997">Cell inner membrane</keyword>
<keyword id="KW-1003">Cell membrane</keyword>
<keyword id="KW-0342">GTP-binding</keyword>
<keyword id="KW-0378">Hydrolase</keyword>
<keyword id="KW-0472">Membrane</keyword>
<keyword id="KW-0547">Nucleotide-binding</keyword>
<keyword id="KW-0648">Protein biosynthesis</keyword>
<proteinExistence type="inferred from homology"/>
<gene>
    <name evidence="1" type="primary">lepA</name>
    <name type="ordered locus">A2cp1_2334</name>
</gene>